<feature type="chain" id="PRO_0000296918" description="Putative manganese efflux pump MntP">
    <location>
        <begin position="1"/>
        <end position="196"/>
    </location>
</feature>
<feature type="transmembrane region" description="Helical" evidence="1">
    <location>
        <begin position="3"/>
        <end position="23"/>
    </location>
</feature>
<feature type="transmembrane region" description="Helical" evidence="1">
    <location>
        <begin position="39"/>
        <end position="59"/>
    </location>
</feature>
<feature type="transmembrane region" description="Helical" evidence="1">
    <location>
        <begin position="67"/>
        <end position="87"/>
    </location>
</feature>
<feature type="transmembrane region" description="Helical" evidence="1">
    <location>
        <begin position="109"/>
        <end position="129"/>
    </location>
</feature>
<feature type="transmembrane region" description="Helical" evidence="1">
    <location>
        <begin position="137"/>
        <end position="157"/>
    </location>
</feature>
<feature type="transmembrane region" description="Helical" evidence="1">
    <location>
        <begin position="172"/>
        <end position="192"/>
    </location>
</feature>
<keyword id="KW-0997">Cell inner membrane</keyword>
<keyword id="KW-1003">Cell membrane</keyword>
<keyword id="KW-0406">Ion transport</keyword>
<keyword id="KW-0464">Manganese</keyword>
<keyword id="KW-0472">Membrane</keyword>
<keyword id="KW-1185">Reference proteome</keyword>
<keyword id="KW-0812">Transmembrane</keyword>
<keyword id="KW-1133">Transmembrane helix</keyword>
<keyword id="KW-0813">Transport</keyword>
<organism>
    <name type="scientific">Chromohalobacter salexigens (strain ATCC BAA-138 / DSM 3043 / CIP 106854 / NCIMB 13768 / 1H11)</name>
    <dbReference type="NCBI Taxonomy" id="290398"/>
    <lineage>
        <taxon>Bacteria</taxon>
        <taxon>Pseudomonadati</taxon>
        <taxon>Pseudomonadota</taxon>
        <taxon>Gammaproteobacteria</taxon>
        <taxon>Oceanospirillales</taxon>
        <taxon>Halomonadaceae</taxon>
        <taxon>Chromohalobacter</taxon>
    </lineage>
</organism>
<evidence type="ECO:0000255" key="1">
    <source>
        <dbReference type="HAMAP-Rule" id="MF_01521"/>
    </source>
</evidence>
<protein>
    <recommendedName>
        <fullName evidence="1">Putative manganese efflux pump MntP</fullName>
    </recommendedName>
</protein>
<gene>
    <name evidence="1" type="primary">mntP</name>
    <name type="ordered locus">Csal_0169</name>
</gene>
<dbReference type="EMBL" id="CP000285">
    <property type="protein sequence ID" value="ABE57533.1"/>
    <property type="molecule type" value="Genomic_DNA"/>
</dbReference>
<dbReference type="RefSeq" id="WP_011505479.1">
    <property type="nucleotide sequence ID" value="NC_007963.1"/>
</dbReference>
<dbReference type="GeneID" id="95332919"/>
<dbReference type="KEGG" id="csa:Csal_0169"/>
<dbReference type="eggNOG" id="COG1971">
    <property type="taxonomic scope" value="Bacteria"/>
</dbReference>
<dbReference type="HOGENOM" id="CLU_096410_0_0_6"/>
<dbReference type="OrthoDB" id="9811590at2"/>
<dbReference type="Proteomes" id="UP000000239">
    <property type="component" value="Chromosome"/>
</dbReference>
<dbReference type="GO" id="GO:0005886">
    <property type="term" value="C:plasma membrane"/>
    <property type="evidence" value="ECO:0007669"/>
    <property type="project" value="UniProtKB-SubCell"/>
</dbReference>
<dbReference type="GO" id="GO:0005384">
    <property type="term" value="F:manganese ion transmembrane transporter activity"/>
    <property type="evidence" value="ECO:0007669"/>
    <property type="project" value="UniProtKB-UniRule"/>
</dbReference>
<dbReference type="HAMAP" id="MF_01521">
    <property type="entry name" value="MntP_pump"/>
    <property type="match status" value="1"/>
</dbReference>
<dbReference type="InterPro" id="IPR003810">
    <property type="entry name" value="Mntp/YtaF"/>
</dbReference>
<dbReference type="InterPro" id="IPR022929">
    <property type="entry name" value="Put_MntP"/>
</dbReference>
<dbReference type="PANTHER" id="PTHR35529">
    <property type="entry name" value="MANGANESE EFFLUX PUMP MNTP-RELATED"/>
    <property type="match status" value="1"/>
</dbReference>
<dbReference type="PANTHER" id="PTHR35529:SF1">
    <property type="entry name" value="MANGANESE EFFLUX PUMP MNTP-RELATED"/>
    <property type="match status" value="1"/>
</dbReference>
<dbReference type="Pfam" id="PF02659">
    <property type="entry name" value="Mntp"/>
    <property type="match status" value="1"/>
</dbReference>
<reference key="1">
    <citation type="journal article" date="2011" name="Stand. Genomic Sci.">
        <title>Complete genome sequence of the halophilic and highly halotolerant Chromohalobacter salexigens type strain (1H11(T)).</title>
        <authorList>
            <person name="Copeland A."/>
            <person name="O'Connor K."/>
            <person name="Lucas S."/>
            <person name="Lapidus A."/>
            <person name="Berry K.W."/>
            <person name="Detter J.C."/>
            <person name="Del Rio T.G."/>
            <person name="Hammon N."/>
            <person name="Dalin E."/>
            <person name="Tice H."/>
            <person name="Pitluck S."/>
            <person name="Bruce D."/>
            <person name="Goodwin L."/>
            <person name="Han C."/>
            <person name="Tapia R."/>
            <person name="Saunders E."/>
            <person name="Schmutz J."/>
            <person name="Brettin T."/>
            <person name="Larimer F."/>
            <person name="Land M."/>
            <person name="Hauser L."/>
            <person name="Vargas C."/>
            <person name="Nieto J.J."/>
            <person name="Kyrpides N.C."/>
            <person name="Ivanova N."/>
            <person name="Goker M."/>
            <person name="Klenk H.P."/>
            <person name="Csonka L.N."/>
            <person name="Woyke T."/>
        </authorList>
    </citation>
    <scope>NUCLEOTIDE SEQUENCE [LARGE SCALE GENOMIC DNA]</scope>
    <source>
        <strain>ATCC BAA-138 / DSM 3043 / CIP 106854 / NCIMB 13768 / 1H11</strain>
    </source>
</reference>
<sequence>MNPASLILLAFAMSTDAFAASIGRGAELRKVRLLSALRIGAVFGVVEAIMPLLGWALGHVAMRFVSGVDHWIAFVMLALLGGHMIWAGVKKEDCAAIKAAETQPENRSIWLIAFTALATSIDAMAVGITLALTDINIIAASVAIGLATALMVTLGTLLGRAIGTIVGKWAEILGGLILIGIGIAVLYEHLAGLASA</sequence>
<name>MNTP_CHRSD</name>
<accession>Q1R175</accession>
<comment type="function">
    <text evidence="1">Probably functions as a manganese efflux pump.</text>
</comment>
<comment type="subcellular location">
    <subcellularLocation>
        <location evidence="1">Cell inner membrane</location>
        <topology evidence="1">Multi-pass membrane protein</topology>
    </subcellularLocation>
</comment>
<comment type="similarity">
    <text evidence="1">Belongs to the MntP (TC 9.B.29) family.</text>
</comment>
<proteinExistence type="inferred from homology"/>